<reference key="1">
    <citation type="journal article" date="2008" name="J. Bacteriol.">
        <title>Complete genome sequence of the mosquitocidal bacterium Bacillus sphaericus C3-41 and comparison with those of closely related Bacillus species.</title>
        <authorList>
            <person name="Hu X."/>
            <person name="Fan W."/>
            <person name="Han B."/>
            <person name="Liu H."/>
            <person name="Zheng D."/>
            <person name="Li Q."/>
            <person name="Dong W."/>
            <person name="Yan J."/>
            <person name="Gao M."/>
            <person name="Berry C."/>
            <person name="Yuan Z."/>
        </authorList>
    </citation>
    <scope>NUCLEOTIDE SEQUENCE [LARGE SCALE GENOMIC DNA]</scope>
    <source>
        <strain>C3-41</strain>
    </source>
</reference>
<keyword id="KW-0687">Ribonucleoprotein</keyword>
<keyword id="KW-0689">Ribosomal protein</keyword>
<keyword id="KW-0694">RNA-binding</keyword>
<keyword id="KW-0699">rRNA-binding</keyword>
<organism>
    <name type="scientific">Lysinibacillus sphaericus (strain C3-41)</name>
    <dbReference type="NCBI Taxonomy" id="444177"/>
    <lineage>
        <taxon>Bacteria</taxon>
        <taxon>Bacillati</taxon>
        <taxon>Bacillota</taxon>
        <taxon>Bacilli</taxon>
        <taxon>Bacillales</taxon>
        <taxon>Bacillaceae</taxon>
        <taxon>Lysinibacillus</taxon>
    </lineage>
</organism>
<evidence type="ECO:0000255" key="1">
    <source>
        <dbReference type="HAMAP-Rule" id="MF_00500"/>
    </source>
</evidence>
<evidence type="ECO:0000305" key="2"/>
<feature type="chain" id="PRO_1000126473" description="Small ribosomal subunit protein bS20">
    <location>
        <begin position="1"/>
        <end position="82"/>
    </location>
</feature>
<name>RS20_LYSSC</name>
<sequence length="82" mass="8871">MPNIKSAIKRVKVNEKANIANSQAKSAMRTTVKKAENAVAENAENKQELLQAAFKSLDKAASKGLIHKNAAARKKSRLAKKA</sequence>
<accession>B1HUH0</accession>
<protein>
    <recommendedName>
        <fullName evidence="1">Small ribosomal subunit protein bS20</fullName>
    </recommendedName>
    <alternativeName>
        <fullName evidence="2">30S ribosomal protein S20</fullName>
    </alternativeName>
</protein>
<proteinExistence type="inferred from homology"/>
<comment type="function">
    <text evidence="1">Binds directly to 16S ribosomal RNA.</text>
</comment>
<comment type="similarity">
    <text evidence="1">Belongs to the bacterial ribosomal protein bS20 family.</text>
</comment>
<gene>
    <name evidence="1" type="primary">rpsT</name>
    <name type="ordered locus">Bsph_3837</name>
</gene>
<dbReference type="EMBL" id="CP000817">
    <property type="protein sequence ID" value="ACA41315.1"/>
    <property type="molecule type" value="Genomic_DNA"/>
</dbReference>
<dbReference type="RefSeq" id="WP_012295365.1">
    <property type="nucleotide sequence ID" value="NC_010382.1"/>
</dbReference>
<dbReference type="SMR" id="B1HUH0"/>
<dbReference type="EnsemblBacteria" id="ACA41315">
    <property type="protein sequence ID" value="ACA41315"/>
    <property type="gene ID" value="Bsph_3837"/>
</dbReference>
<dbReference type="KEGG" id="lsp:Bsph_3837"/>
<dbReference type="HOGENOM" id="CLU_160655_1_0_9"/>
<dbReference type="Proteomes" id="UP000002164">
    <property type="component" value="Chromosome"/>
</dbReference>
<dbReference type="GO" id="GO:0005829">
    <property type="term" value="C:cytosol"/>
    <property type="evidence" value="ECO:0007669"/>
    <property type="project" value="TreeGrafter"/>
</dbReference>
<dbReference type="GO" id="GO:0015935">
    <property type="term" value="C:small ribosomal subunit"/>
    <property type="evidence" value="ECO:0007669"/>
    <property type="project" value="TreeGrafter"/>
</dbReference>
<dbReference type="GO" id="GO:0070181">
    <property type="term" value="F:small ribosomal subunit rRNA binding"/>
    <property type="evidence" value="ECO:0007669"/>
    <property type="project" value="TreeGrafter"/>
</dbReference>
<dbReference type="GO" id="GO:0003735">
    <property type="term" value="F:structural constituent of ribosome"/>
    <property type="evidence" value="ECO:0007669"/>
    <property type="project" value="InterPro"/>
</dbReference>
<dbReference type="GO" id="GO:0006412">
    <property type="term" value="P:translation"/>
    <property type="evidence" value="ECO:0007669"/>
    <property type="project" value="UniProtKB-UniRule"/>
</dbReference>
<dbReference type="FunFam" id="1.20.58.110:FF:000001">
    <property type="entry name" value="30S ribosomal protein S20"/>
    <property type="match status" value="1"/>
</dbReference>
<dbReference type="Gene3D" id="1.20.58.110">
    <property type="entry name" value="Ribosomal protein S20"/>
    <property type="match status" value="1"/>
</dbReference>
<dbReference type="HAMAP" id="MF_00500">
    <property type="entry name" value="Ribosomal_bS20"/>
    <property type="match status" value="1"/>
</dbReference>
<dbReference type="InterPro" id="IPR002583">
    <property type="entry name" value="Ribosomal_bS20"/>
</dbReference>
<dbReference type="InterPro" id="IPR036510">
    <property type="entry name" value="Ribosomal_bS20_sf"/>
</dbReference>
<dbReference type="NCBIfam" id="TIGR00029">
    <property type="entry name" value="S20"/>
    <property type="match status" value="1"/>
</dbReference>
<dbReference type="PANTHER" id="PTHR33398">
    <property type="entry name" value="30S RIBOSOMAL PROTEIN S20"/>
    <property type="match status" value="1"/>
</dbReference>
<dbReference type="PANTHER" id="PTHR33398:SF1">
    <property type="entry name" value="SMALL RIBOSOMAL SUBUNIT PROTEIN BS20C"/>
    <property type="match status" value="1"/>
</dbReference>
<dbReference type="Pfam" id="PF01649">
    <property type="entry name" value="Ribosomal_S20p"/>
    <property type="match status" value="1"/>
</dbReference>
<dbReference type="SUPFAM" id="SSF46992">
    <property type="entry name" value="Ribosomal protein S20"/>
    <property type="match status" value="1"/>
</dbReference>